<feature type="signal peptide" evidence="1">
    <location>
        <begin position="1"/>
        <end position="24"/>
    </location>
</feature>
<feature type="chain" id="PRO_0000233101" description="Glycoprotein hormones alpha chain">
    <location>
        <begin position="25"/>
        <end position="120"/>
    </location>
</feature>
<feature type="glycosylation site" description="N-linked (GlcNAc...) asparagine" evidence="2">
    <location>
        <position position="80"/>
    </location>
</feature>
<feature type="glycosylation site" description="N-linked (GlcNAc...) asparagine" evidence="2">
    <location>
        <position position="106"/>
    </location>
</feature>
<feature type="disulfide bond" evidence="2">
    <location>
        <begin position="35"/>
        <end position="59"/>
    </location>
</feature>
<feature type="disulfide bond" evidence="2">
    <location>
        <begin position="38"/>
        <end position="88"/>
    </location>
</feature>
<feature type="disulfide bond" evidence="2">
    <location>
        <begin position="56"/>
        <end position="110"/>
    </location>
</feature>
<feature type="disulfide bond" evidence="2">
    <location>
        <begin position="60"/>
        <end position="112"/>
    </location>
</feature>
<feature type="disulfide bond" evidence="2">
    <location>
        <begin position="87"/>
        <end position="115"/>
    </location>
</feature>
<reference key="1">
    <citation type="submission" date="2005-07" db="EMBL/GenBank/DDBJ databases">
        <title>Molecular cloning of glycoprotein alpha-subunit and follicle stimulating hormone and luteinizing hormone beta-subunits from the Bolivian squirrel monkey.</title>
        <authorList>
            <person name="Scammell J.G."/>
            <person name="Moyer F.S."/>
            <person name="Gibson S.V."/>
            <person name="Valentine D.L."/>
        </authorList>
    </citation>
    <scope>NUCLEOTIDE SEQUENCE [MRNA]</scope>
</reference>
<gene>
    <name type="primary">CGA</name>
</gene>
<evidence type="ECO:0000250" key="1"/>
<evidence type="ECO:0000250" key="2">
    <source>
        <dbReference type="UniProtKB" id="P01215"/>
    </source>
</evidence>
<evidence type="ECO:0000305" key="3"/>
<accession>Q3YC03</accession>
<sequence>MDSYRKYAAIILVTLSVFLHILHSLPEGEFTTEECPECKLKENKYFSKLGTPIYQCTGCCFSRAYPTPFRSQKTMLVPKNVTSESSCCVAKAYTKATVMGNVKVENHTECHCSTCYYHKF</sequence>
<name>GLHA_SAIBB</name>
<dbReference type="EMBL" id="DQ143872">
    <property type="protein sequence ID" value="AAZ73616.1"/>
    <property type="molecule type" value="mRNA"/>
</dbReference>
<dbReference type="RefSeq" id="XP_010332116.1">
    <property type="nucleotide sequence ID" value="XM_010333814.2"/>
</dbReference>
<dbReference type="SMR" id="Q3YC03"/>
<dbReference type="STRING" id="39432.ENSSBOP00000008016"/>
<dbReference type="GlyCosmos" id="Q3YC03">
    <property type="glycosylation" value="2 sites, No reported glycans"/>
</dbReference>
<dbReference type="Ensembl" id="ENSSBOT00000024774.1">
    <property type="protein sequence ID" value="ENSSBOP00000008016.1"/>
    <property type="gene ID" value="ENSSBOG00000020930.1"/>
</dbReference>
<dbReference type="GeneID" id="101032263"/>
<dbReference type="KEGG" id="sbq:101032263"/>
<dbReference type="CTD" id="1081"/>
<dbReference type="GeneTree" id="ENSGT00390000012242"/>
<dbReference type="OMA" id="VKNHTDC"/>
<dbReference type="Proteomes" id="UP000233220">
    <property type="component" value="Unplaced"/>
</dbReference>
<dbReference type="GO" id="GO:0005615">
    <property type="term" value="C:extracellular space"/>
    <property type="evidence" value="ECO:0000250"/>
    <property type="project" value="UniProtKB"/>
</dbReference>
<dbReference type="GO" id="GO:0016914">
    <property type="term" value="C:follicle-stimulating hormone complex"/>
    <property type="evidence" value="ECO:0000250"/>
    <property type="project" value="UniProtKB"/>
</dbReference>
<dbReference type="GO" id="GO:0016913">
    <property type="term" value="F:follicle-stimulating hormone activity"/>
    <property type="evidence" value="ECO:0000250"/>
    <property type="project" value="UniProtKB"/>
</dbReference>
<dbReference type="GO" id="GO:0007186">
    <property type="term" value="P:G protein-coupled receptor signaling pathway"/>
    <property type="evidence" value="ECO:0000250"/>
    <property type="project" value="UniProtKB"/>
</dbReference>
<dbReference type="GO" id="GO:0010893">
    <property type="term" value="P:positive regulation of steroid biosynthetic process"/>
    <property type="evidence" value="ECO:0000250"/>
    <property type="project" value="UniProtKB"/>
</dbReference>
<dbReference type="GO" id="GO:0010469">
    <property type="term" value="P:regulation of signaling receptor activity"/>
    <property type="evidence" value="ECO:0000250"/>
    <property type="project" value="UniProtKB"/>
</dbReference>
<dbReference type="GO" id="GO:0006590">
    <property type="term" value="P:thyroid hormone generation"/>
    <property type="evidence" value="ECO:0007669"/>
    <property type="project" value="TreeGrafter"/>
</dbReference>
<dbReference type="FunFam" id="2.10.90.10:FF:000011">
    <property type="entry name" value="Glycoprotein hormones alpha chain"/>
    <property type="match status" value="1"/>
</dbReference>
<dbReference type="Gene3D" id="2.10.90.10">
    <property type="entry name" value="Cystine-knot cytokines"/>
    <property type="match status" value="1"/>
</dbReference>
<dbReference type="InterPro" id="IPR029034">
    <property type="entry name" value="Cystine-knot_cytokine"/>
</dbReference>
<dbReference type="InterPro" id="IPR000476">
    <property type="entry name" value="Glyco_hormone"/>
</dbReference>
<dbReference type="PANTHER" id="PTHR11509">
    <property type="entry name" value="GLYCOPROTEIN HORMONE ALPHA CHAIN"/>
    <property type="match status" value="1"/>
</dbReference>
<dbReference type="PANTHER" id="PTHR11509:SF0">
    <property type="entry name" value="GLYCOPROTEIN HORMONES ALPHA CHAIN"/>
    <property type="match status" value="1"/>
</dbReference>
<dbReference type="Pfam" id="PF00236">
    <property type="entry name" value="Hormone_6"/>
    <property type="match status" value="1"/>
</dbReference>
<dbReference type="PRINTS" id="PR00274">
    <property type="entry name" value="GLYCOHORMONE"/>
</dbReference>
<dbReference type="SMART" id="SM00067">
    <property type="entry name" value="GHA"/>
    <property type="match status" value="1"/>
</dbReference>
<dbReference type="SUPFAM" id="SSF57501">
    <property type="entry name" value="Cystine-knot cytokines"/>
    <property type="match status" value="1"/>
</dbReference>
<dbReference type="PROSITE" id="PS00779">
    <property type="entry name" value="GLYCO_HORMONE_ALPHA_1"/>
    <property type="match status" value="1"/>
</dbReference>
<dbReference type="PROSITE" id="PS00780">
    <property type="entry name" value="GLYCO_HORMONE_ALPHA_2"/>
    <property type="match status" value="1"/>
</dbReference>
<dbReference type="PROSITE" id="PS50277">
    <property type="entry name" value="GLYCO_HORMONE_ALPHA_3"/>
    <property type="match status" value="1"/>
</dbReference>
<keyword id="KW-1015">Disulfide bond</keyword>
<keyword id="KW-0325">Glycoprotein</keyword>
<keyword id="KW-0372">Hormone</keyword>
<keyword id="KW-1185">Reference proteome</keyword>
<keyword id="KW-0964">Secreted</keyword>
<keyword id="KW-0732">Signal</keyword>
<comment type="function">
    <text evidence="2">Shared alpha chain of the active heterodimeric glycoprotein hormones thyrotropin/thyroid stimulating hormone/TSH, lutropin/luteinizing hormone/LH, follitropin/follicle stimulating hormone/FSH and choriogonadotropin/CG. These hormones bind specific receptors on target cells that in turn activate downstream signaling pathways.</text>
</comment>
<comment type="subunit">
    <text evidence="2">Heterodimer. The active hormones thyrotropin, lutropin, follitropin and choriogonadotropin are heterodimers composed of CGA, a common alpha chain described here and a unique beta chain which confers their biological specificity to the hormones: TSHB for thyrotropin, LHB for lutropin, FSHB for follitropin and choriogonadotropin subunit beta/CGB for choriogonadotropin.</text>
</comment>
<comment type="subcellular location">
    <subcellularLocation>
        <location evidence="2">Secreted</location>
    </subcellularLocation>
</comment>
<comment type="similarity">
    <text evidence="3">Belongs to the glycoprotein hormones subunit alpha family.</text>
</comment>
<proteinExistence type="evidence at transcript level"/>
<organism>
    <name type="scientific">Saimiri boliviensis boliviensis</name>
    <name type="common">Bolivian squirrel monkey</name>
    <dbReference type="NCBI Taxonomy" id="39432"/>
    <lineage>
        <taxon>Eukaryota</taxon>
        <taxon>Metazoa</taxon>
        <taxon>Chordata</taxon>
        <taxon>Craniata</taxon>
        <taxon>Vertebrata</taxon>
        <taxon>Euteleostomi</taxon>
        <taxon>Mammalia</taxon>
        <taxon>Eutheria</taxon>
        <taxon>Euarchontoglires</taxon>
        <taxon>Primates</taxon>
        <taxon>Haplorrhini</taxon>
        <taxon>Platyrrhini</taxon>
        <taxon>Cebidae</taxon>
        <taxon>Saimiriinae</taxon>
        <taxon>Saimiri</taxon>
    </lineage>
</organism>
<protein>
    <recommendedName>
        <fullName>Glycoprotein hormones alpha chain</fullName>
    </recommendedName>
    <alternativeName>
        <fullName>Anterior pituitary glycoprotein hormones common subunit alpha</fullName>
    </alternativeName>
    <alternativeName>
        <fullName>Choriogonadotropin alpha chain</fullName>
    </alternativeName>
    <alternativeName>
        <fullName>Chorionic gonadotrophin subunit alpha</fullName>
        <shortName>CG-alpha</shortName>
    </alternativeName>
    <alternativeName>
        <fullName>Follicle-stimulating hormone alpha chain</fullName>
        <shortName>FSH-alpha</shortName>
    </alternativeName>
    <alternativeName>
        <fullName>Follitropin alpha chain</fullName>
    </alternativeName>
    <alternativeName>
        <fullName>Luteinizing hormone alpha chain</fullName>
        <shortName>LSH-alpha</shortName>
    </alternativeName>
    <alternativeName>
        <fullName>Lutropin alpha chain</fullName>
    </alternativeName>
    <alternativeName>
        <fullName>Thyroid-stimulating hormone alpha chain</fullName>
        <shortName>TSH-alpha</shortName>
    </alternativeName>
    <alternativeName>
        <fullName>Thyrotropin alpha chain</fullName>
    </alternativeName>
</protein>